<accession>Q9UBX3</accession>
<accession>Q542Z3</accession>
<accession>Q96BA1</accession>
<accession>Q96IP1</accession>
<dbReference type="EMBL" id="AJ131612">
    <property type="protein sequence ID" value="CAB60007.1"/>
    <property type="molecule type" value="Genomic_DNA"/>
</dbReference>
<dbReference type="EMBL" id="AJ131613">
    <property type="protein sequence ID" value="CAB59892.1"/>
    <property type="molecule type" value="mRNA"/>
</dbReference>
<dbReference type="EMBL" id="AK075249">
    <property type="protein sequence ID" value="BAC11497.1"/>
    <property type="molecule type" value="mRNA"/>
</dbReference>
<dbReference type="EMBL" id="CH471099">
    <property type="protein sequence ID" value="EAW89682.1"/>
    <property type="molecule type" value="Genomic_DNA"/>
</dbReference>
<dbReference type="EMBL" id="BC007355">
    <property type="protein sequence ID" value="AAH07355.1"/>
    <property type="molecule type" value="mRNA"/>
</dbReference>
<dbReference type="EMBL" id="BC015797">
    <property type="protein sequence ID" value="AAH15797.1"/>
    <property type="molecule type" value="mRNA"/>
</dbReference>
<dbReference type="CCDS" id="CCDS11786.1">
    <molecule id="Q9UBX3-1"/>
</dbReference>
<dbReference type="CCDS" id="CCDS59301.1">
    <molecule id="Q9UBX3-2"/>
</dbReference>
<dbReference type="RefSeq" id="NP_001257817.1">
    <molecule id="Q9UBX3-2"/>
    <property type="nucleotide sequence ID" value="NM_001270888.2"/>
</dbReference>
<dbReference type="RefSeq" id="NP_001257882.1">
    <property type="nucleotide sequence ID" value="NM_001270953.1"/>
</dbReference>
<dbReference type="RefSeq" id="NP_036272.2">
    <molecule id="Q9UBX3-1"/>
    <property type="nucleotide sequence ID" value="NM_012140.4"/>
</dbReference>
<dbReference type="SMR" id="Q9UBX3"/>
<dbReference type="BioGRID" id="107850">
    <property type="interactions" value="214"/>
</dbReference>
<dbReference type="FunCoup" id="Q9UBX3">
    <property type="interactions" value="1458"/>
</dbReference>
<dbReference type="IntAct" id="Q9UBX3">
    <property type="interactions" value="105"/>
</dbReference>
<dbReference type="MINT" id="Q9UBX3"/>
<dbReference type="STRING" id="9606.ENSP00000461324"/>
<dbReference type="DrugBank" id="DB00139">
    <property type="generic name" value="Succinic acid"/>
</dbReference>
<dbReference type="TCDB" id="2.A.29.2.7">
    <property type="family name" value="the mitochondrial carrier (mc) family"/>
</dbReference>
<dbReference type="iPTMnet" id="Q9UBX3"/>
<dbReference type="PhosphoSitePlus" id="Q9UBX3"/>
<dbReference type="SwissPalm" id="Q9UBX3"/>
<dbReference type="BioMuta" id="SLC25A10"/>
<dbReference type="DMDM" id="20137671"/>
<dbReference type="jPOST" id="Q9UBX3"/>
<dbReference type="MassIVE" id="Q9UBX3"/>
<dbReference type="PaxDb" id="9606-ENSP00000461324"/>
<dbReference type="PeptideAtlas" id="Q9UBX3"/>
<dbReference type="ProteomicsDB" id="84091">
    <molecule id="Q9UBX3-1"/>
</dbReference>
<dbReference type="ProteomicsDB" id="84092">
    <molecule id="Q9UBX3-2"/>
</dbReference>
<dbReference type="Pumba" id="Q9UBX3"/>
<dbReference type="Antibodypedia" id="19833">
    <property type="antibodies" value="107 antibodies from 19 providers"/>
</dbReference>
<dbReference type="DNASU" id="1468"/>
<dbReference type="Ensembl" id="ENST00000331531.9">
    <molecule id="Q9UBX3-2"/>
    <property type="protein sequence ID" value="ENSP00000328403.5"/>
    <property type="gene ID" value="ENSG00000183048.12"/>
</dbReference>
<dbReference type="Ensembl" id="ENST00000350690.10">
    <molecule id="Q9UBX3-1"/>
    <property type="protein sequence ID" value="ENSP00000345580.5"/>
    <property type="gene ID" value="ENSG00000183048.12"/>
</dbReference>
<dbReference type="GeneID" id="1468"/>
<dbReference type="KEGG" id="hsa:1468"/>
<dbReference type="MANE-Select" id="ENST00000350690.10">
    <property type="protein sequence ID" value="ENSP00000345580.5"/>
    <property type="RefSeq nucleotide sequence ID" value="NM_012140.5"/>
    <property type="RefSeq protein sequence ID" value="NP_036272.2"/>
</dbReference>
<dbReference type="UCSC" id="uc002kbi.5">
    <molecule id="Q9UBX3-1"/>
    <property type="organism name" value="human"/>
</dbReference>
<dbReference type="AGR" id="HGNC:10980"/>
<dbReference type="CTD" id="1468"/>
<dbReference type="DisGeNET" id="1468"/>
<dbReference type="GeneCards" id="SLC25A10"/>
<dbReference type="HGNC" id="HGNC:10980">
    <property type="gene designation" value="SLC25A10"/>
</dbReference>
<dbReference type="HPA" id="ENSG00000183048">
    <property type="expression patterns" value="Tissue enhanced (liver)"/>
</dbReference>
<dbReference type="MalaCards" id="SLC25A10"/>
<dbReference type="MIM" id="606794">
    <property type="type" value="gene"/>
</dbReference>
<dbReference type="MIM" id="618972">
    <property type="type" value="phenotype"/>
</dbReference>
<dbReference type="neXtProt" id="NX_Q9UBX3"/>
<dbReference type="OpenTargets" id="ENSG00000183048"/>
<dbReference type="PharmGKB" id="PA35856"/>
<dbReference type="VEuPathDB" id="HostDB:ENSG00000183048"/>
<dbReference type="eggNOG" id="KOG0759">
    <property type="taxonomic scope" value="Eukaryota"/>
</dbReference>
<dbReference type="eggNOG" id="KOG1715">
    <property type="taxonomic scope" value="Eukaryota"/>
</dbReference>
<dbReference type="GeneTree" id="ENSGT00940000156783"/>
<dbReference type="HOGENOM" id="CLU_015166_14_1_1"/>
<dbReference type="InParanoid" id="Q9UBX3"/>
<dbReference type="OMA" id="TTRFGAY"/>
<dbReference type="OrthoDB" id="448427at2759"/>
<dbReference type="PAN-GO" id="Q9UBX3">
    <property type="GO annotations" value="12 GO annotations based on evolutionary models"/>
</dbReference>
<dbReference type="PhylomeDB" id="Q9UBX3"/>
<dbReference type="TreeFam" id="TF312920"/>
<dbReference type="PathwayCommons" id="Q9UBX3"/>
<dbReference type="Reactome" id="R-HSA-1614517">
    <property type="pathway name" value="Sulfide oxidation to sulfate"/>
</dbReference>
<dbReference type="Reactome" id="R-HSA-428643">
    <property type="pathway name" value="Organic anion transporters"/>
</dbReference>
<dbReference type="SignaLink" id="Q9UBX3"/>
<dbReference type="BioGRID-ORCS" id="1468">
    <property type="hits" value="242 hits in 1169 CRISPR screens"/>
</dbReference>
<dbReference type="ChiTaRS" id="SLC25A10">
    <property type="organism name" value="human"/>
</dbReference>
<dbReference type="GeneWiki" id="SLC25A10"/>
<dbReference type="GenomeRNAi" id="1468"/>
<dbReference type="Pharos" id="Q9UBX3">
    <property type="development level" value="Tbio"/>
</dbReference>
<dbReference type="PRO" id="PR:Q9UBX3"/>
<dbReference type="Proteomes" id="UP000005640">
    <property type="component" value="Chromosome 17"/>
</dbReference>
<dbReference type="RNAct" id="Q9UBX3">
    <property type="molecule type" value="protein"/>
</dbReference>
<dbReference type="Bgee" id="ENSG00000183048">
    <property type="expression patterns" value="Expressed in right lobe of liver and 100 other cell types or tissues"/>
</dbReference>
<dbReference type="ExpressionAtlas" id="Q9UBX3">
    <property type="expression patterns" value="baseline and differential"/>
</dbReference>
<dbReference type="GO" id="GO:0005743">
    <property type="term" value="C:mitochondrial inner membrane"/>
    <property type="evidence" value="ECO:0000304"/>
    <property type="project" value="Reactome"/>
</dbReference>
<dbReference type="GO" id="GO:0005739">
    <property type="term" value="C:mitochondrion"/>
    <property type="evidence" value="ECO:0000314"/>
    <property type="project" value="HPA"/>
</dbReference>
<dbReference type="GO" id="GO:0005654">
    <property type="term" value="C:nucleoplasm"/>
    <property type="evidence" value="ECO:0000314"/>
    <property type="project" value="HPA"/>
</dbReference>
<dbReference type="GO" id="GO:0005634">
    <property type="term" value="C:nucleus"/>
    <property type="evidence" value="ECO:0007005"/>
    <property type="project" value="UniProtKB"/>
</dbReference>
<dbReference type="GO" id="GO:0015297">
    <property type="term" value="F:antiporter activity"/>
    <property type="evidence" value="ECO:0007669"/>
    <property type="project" value="UniProtKB-KW"/>
</dbReference>
<dbReference type="GO" id="GO:0005310">
    <property type="term" value="F:dicarboxylic acid transmembrane transporter activity"/>
    <property type="evidence" value="ECO:0000269"/>
    <property type="project" value="Reactome"/>
</dbReference>
<dbReference type="GO" id="GO:0015140">
    <property type="term" value="F:malate transmembrane transporter activity"/>
    <property type="evidence" value="ECO:0000318"/>
    <property type="project" value="GO_Central"/>
</dbReference>
<dbReference type="GO" id="GO:0015131">
    <property type="term" value="F:oxaloacetate transmembrane transporter activity"/>
    <property type="evidence" value="ECO:0000318"/>
    <property type="project" value="GO_Central"/>
</dbReference>
<dbReference type="GO" id="GO:0015141">
    <property type="term" value="F:succinate transmembrane transporter activity"/>
    <property type="evidence" value="ECO:0000318"/>
    <property type="project" value="GO_Central"/>
</dbReference>
<dbReference type="GO" id="GO:0015116">
    <property type="term" value="F:sulfate transmembrane transporter activity"/>
    <property type="evidence" value="ECO:0000318"/>
    <property type="project" value="GO_Central"/>
</dbReference>
<dbReference type="GO" id="GO:0015117">
    <property type="term" value="F:thiosulfate transmembrane transporter activity"/>
    <property type="evidence" value="ECO:0000318"/>
    <property type="project" value="GO_Central"/>
</dbReference>
<dbReference type="GO" id="GO:0006835">
    <property type="term" value="P:dicarboxylic acid transport"/>
    <property type="evidence" value="ECO:0000304"/>
    <property type="project" value="ProtInc"/>
</dbReference>
<dbReference type="GO" id="GO:0006094">
    <property type="term" value="P:gluconeogenesis"/>
    <property type="evidence" value="ECO:0000304"/>
    <property type="project" value="ProtInc"/>
</dbReference>
<dbReference type="GO" id="GO:0046166">
    <property type="term" value="P:glyceraldehyde-3-phosphate biosynthetic process"/>
    <property type="evidence" value="ECO:0007669"/>
    <property type="project" value="Ensembl"/>
</dbReference>
<dbReference type="GO" id="GO:0006869">
    <property type="term" value="P:lipid transport"/>
    <property type="evidence" value="ECO:0007669"/>
    <property type="project" value="UniProtKB-KW"/>
</dbReference>
<dbReference type="GO" id="GO:0071423">
    <property type="term" value="P:malate transmembrane transport"/>
    <property type="evidence" value="ECO:0000318"/>
    <property type="project" value="GO_Central"/>
</dbReference>
<dbReference type="GO" id="GO:0006811">
    <property type="term" value="P:monoatomic ion transport"/>
    <property type="evidence" value="ECO:0000304"/>
    <property type="project" value="Reactome"/>
</dbReference>
<dbReference type="GO" id="GO:0015729">
    <property type="term" value="P:oxaloacetate transport"/>
    <property type="evidence" value="ECO:0000318"/>
    <property type="project" value="GO_Central"/>
</dbReference>
<dbReference type="GO" id="GO:0035435">
    <property type="term" value="P:phosphate ion transmembrane transport"/>
    <property type="evidence" value="ECO:0000318"/>
    <property type="project" value="GO_Central"/>
</dbReference>
<dbReference type="GO" id="GO:0071422">
    <property type="term" value="P:succinate transmembrane transport"/>
    <property type="evidence" value="ECO:0000318"/>
    <property type="project" value="GO_Central"/>
</dbReference>
<dbReference type="GO" id="GO:1902358">
    <property type="term" value="P:sulfate transmembrane transport"/>
    <property type="evidence" value="ECO:0000318"/>
    <property type="project" value="GO_Central"/>
</dbReference>
<dbReference type="GO" id="GO:0070221">
    <property type="term" value="P:sulfide oxidation, using sulfide:quinone oxidoreductase"/>
    <property type="evidence" value="ECO:0000304"/>
    <property type="project" value="Reactome"/>
</dbReference>
<dbReference type="GO" id="GO:0015709">
    <property type="term" value="P:thiosulfate transport"/>
    <property type="evidence" value="ECO:0000318"/>
    <property type="project" value="GO_Central"/>
</dbReference>
<dbReference type="FunFam" id="1.50.40.10:FF:000043">
    <property type="entry name" value="mitochondrial dicarboxylate carrier isoform X2"/>
    <property type="match status" value="1"/>
</dbReference>
<dbReference type="Gene3D" id="1.50.40.10">
    <property type="entry name" value="Mitochondrial carrier domain"/>
    <property type="match status" value="1"/>
</dbReference>
<dbReference type="InterPro" id="IPR002067">
    <property type="entry name" value="Mit_carrier"/>
</dbReference>
<dbReference type="InterPro" id="IPR050391">
    <property type="entry name" value="Mito_Metabolite_Transporter"/>
</dbReference>
<dbReference type="InterPro" id="IPR018108">
    <property type="entry name" value="Mitochondrial_sb/sol_carrier"/>
</dbReference>
<dbReference type="InterPro" id="IPR023395">
    <property type="entry name" value="Mt_carrier_dom_sf"/>
</dbReference>
<dbReference type="PANTHER" id="PTHR45618">
    <property type="entry name" value="MITOCHONDRIAL DICARBOXYLATE CARRIER-RELATED"/>
    <property type="match status" value="1"/>
</dbReference>
<dbReference type="Pfam" id="PF00153">
    <property type="entry name" value="Mito_carr"/>
    <property type="match status" value="3"/>
</dbReference>
<dbReference type="PRINTS" id="PR00784">
    <property type="entry name" value="MTUNCOUPLING"/>
</dbReference>
<dbReference type="SUPFAM" id="SSF103506">
    <property type="entry name" value="Mitochondrial carrier"/>
    <property type="match status" value="1"/>
</dbReference>
<dbReference type="PROSITE" id="PS50920">
    <property type="entry name" value="SOLCAR"/>
    <property type="match status" value="3"/>
</dbReference>
<sequence length="287" mass="31282">MAAEARVSRWYFGGLASCGAACCTHPLDLLKVHLQTQQEVKLRMTGMALRVVRTDGILALYSGLSASLCRQMTYSLTRFAIYETVRDRVAKGSQGPLPFHEKVLLGSVSGLAGGFVGTPADLVNVRMQNDVKLPQGQRRNYAHALDGLYRVAREEGLRRLFSGATMASSRGALVTVGQLSCYDQAKQLVLSTGYLSDNIFTHFVASFIAGGCATFLCQPLDVLKTRLMNSKGEYQGVFHCAVETAKLGPLAFYKGLVPAGIRLIPHTVLTFVFLEQLRKNFGIKVPS</sequence>
<proteinExistence type="evidence at protein level"/>
<feature type="chain" id="PRO_0000090609" description="Mitochondrial dicarboxylate carrier">
    <location>
        <begin position="1"/>
        <end position="287"/>
    </location>
</feature>
<feature type="transmembrane region" description="Helical; Name=1" evidence="3">
    <location>
        <begin position="10"/>
        <end position="30"/>
    </location>
</feature>
<feature type="transmembrane region" description="Helical; Name=2" evidence="3">
    <location>
        <begin position="63"/>
        <end position="82"/>
    </location>
</feature>
<feature type="transmembrane region" description="Helical; Name=3" evidence="3">
    <location>
        <begin position="103"/>
        <end position="123"/>
    </location>
</feature>
<feature type="transmembrane region" description="Helical; Name=4" evidence="3">
    <location>
        <begin position="163"/>
        <end position="182"/>
    </location>
</feature>
<feature type="transmembrane region" description="Helical; Name=5" evidence="3">
    <location>
        <begin position="203"/>
        <end position="223"/>
    </location>
</feature>
<feature type="transmembrane region" description="Helical; Name=6" evidence="3">
    <location>
        <begin position="255"/>
        <end position="275"/>
    </location>
</feature>
<feature type="repeat" description="Solcar 1">
    <location>
        <begin position="8"/>
        <end position="88"/>
    </location>
</feature>
<feature type="repeat" description="Solcar 2">
    <location>
        <begin position="101"/>
        <end position="188"/>
    </location>
</feature>
<feature type="repeat" description="Solcar 3">
    <location>
        <begin position="197"/>
        <end position="280"/>
    </location>
</feature>
<feature type="splice variant" id="VSP_003267" description="In isoform 2." evidence="7">
    <original>A</original>
    <variation>AAAGDEPPPQ</variation>
    <location>
        <position position="209"/>
    </location>
</feature>
<feature type="sequence variant" id="VAR_084678" description="In MTDPS19; no protein detected in patient cells." evidence="5">
    <location>
        <begin position="102"/>
        <end position="287"/>
    </location>
</feature>
<feature type="sequence conflict" description="In Ref. 1; CAB60007/CAB59892." evidence="8" ref="1">
    <original>L</original>
    <variation>R</variation>
    <location>
        <position position="188"/>
    </location>
</feature>
<comment type="function">
    <text evidence="2 5">Catalyzes the electroneutral exchange or flux of physiologically important metabolites such as dicarboxylates (malonate, malate, succinate), inorganic sulfur-containing anions, and phosphate, across mitochondrial inner membrane (PubMed:29211846). Plays an important role in gluconeogenesis, fatty acid metabolism, urea synthesis, and sulfur metabolism, particularly in liver, by supplying the substrates for the different metabolic processes. Regulates fatty acid release from adipocytes, and contributes to systemic insulin sensitivity (By similarity).</text>
</comment>
<comment type="catalytic activity">
    <reaction evidence="9">
        <text>(S)-malate(in) + phosphate(out) = (S)-malate(out) + phosphate(in)</text>
        <dbReference type="Rhea" id="RHEA:71607"/>
        <dbReference type="ChEBI" id="CHEBI:15589"/>
        <dbReference type="ChEBI" id="CHEBI:43474"/>
    </reaction>
</comment>
<comment type="catalytic activity">
    <reaction evidence="1">
        <text>malonate(out) + (S)-malate(in) = malonate(in) + (S)-malate(out)</text>
        <dbReference type="Rhea" id="RHEA:71611"/>
        <dbReference type="ChEBI" id="CHEBI:15589"/>
        <dbReference type="ChEBI" id="CHEBI:15792"/>
    </reaction>
</comment>
<comment type="catalytic activity">
    <reaction evidence="1">
        <text>(S)-malate(in) + succinate(out) = (S)-malate(out) + succinate(in)</text>
        <dbReference type="Rhea" id="RHEA:29327"/>
        <dbReference type="ChEBI" id="CHEBI:15589"/>
        <dbReference type="ChEBI" id="CHEBI:30031"/>
    </reaction>
</comment>
<comment type="catalytic activity">
    <reaction evidence="1">
        <text>(S)-malate(in) + sulfate(out) = (S)-malate(out) + sulfate(in)</text>
        <dbReference type="Rhea" id="RHEA:71615"/>
        <dbReference type="ChEBI" id="CHEBI:15589"/>
        <dbReference type="ChEBI" id="CHEBI:16189"/>
    </reaction>
</comment>
<comment type="catalytic activity">
    <reaction evidence="1">
        <text>malonate(out) + phosphate(in) = malonate(in) + phosphate(out)</text>
        <dbReference type="Rhea" id="RHEA:71623"/>
        <dbReference type="ChEBI" id="CHEBI:15792"/>
        <dbReference type="ChEBI" id="CHEBI:43474"/>
    </reaction>
</comment>
<comment type="catalytic activity">
    <reaction evidence="1">
        <text>succinate(out) + phosphate(in) = succinate(in) + phosphate(out)</text>
        <dbReference type="Rhea" id="RHEA:71627"/>
        <dbReference type="ChEBI" id="CHEBI:30031"/>
        <dbReference type="ChEBI" id="CHEBI:43474"/>
    </reaction>
</comment>
<comment type="catalytic activity">
    <reaction evidence="1">
        <text>sulfate(out) + phosphate(in) = sulfate(in) + phosphate(out)</text>
        <dbReference type="Rhea" id="RHEA:71631"/>
        <dbReference type="ChEBI" id="CHEBI:16189"/>
        <dbReference type="ChEBI" id="CHEBI:43474"/>
    </reaction>
</comment>
<comment type="catalytic activity">
    <reaction evidence="2">
        <text>malonate(out) + succinate(in) = malonate(in) + succinate(out)</text>
        <dbReference type="Rhea" id="RHEA:71667"/>
        <dbReference type="ChEBI" id="CHEBI:15792"/>
        <dbReference type="ChEBI" id="CHEBI:30031"/>
    </reaction>
</comment>
<comment type="interaction">
    <interactant intactId="EBI-750394">
        <id>Q9UBX3</id>
    </interactant>
    <interactant intactId="EBI-10171697">
        <id>Q6A162</id>
        <label>KRT40</label>
    </interactant>
    <organismsDiffer>false</organismsDiffer>
    <experiments>3</experiments>
</comment>
<comment type="interaction">
    <interactant intactId="EBI-750394">
        <id>Q9UBX3</id>
    </interactant>
    <interactant intactId="EBI-10171774">
        <id>P60410</id>
        <label>KRTAP10-8</label>
    </interactant>
    <organismsDiffer>false</organismsDiffer>
    <experiments>3</experiments>
</comment>
<comment type="interaction">
    <interactant intactId="EBI-750394">
        <id>Q9UBX3</id>
    </interactant>
    <interactant intactId="EBI-10172511">
        <id>Q9BYR5</id>
        <label>KRTAP4-2</label>
    </interactant>
    <organismsDiffer>false</organismsDiffer>
    <experiments>3</experiments>
</comment>
<comment type="interaction">
    <interactant intactId="EBI-750394">
        <id>Q9UBX3</id>
    </interactant>
    <interactant intactId="EBI-3958099">
        <id>P26371</id>
        <label>KRTAP5-9</label>
    </interactant>
    <organismsDiffer>false</organismsDiffer>
    <experiments>3</experiments>
</comment>
<comment type="interaction">
    <interactant intactId="EBI-750394">
        <id>Q9UBX3</id>
    </interactant>
    <interactant intactId="EBI-724076">
        <id>Q99750</id>
        <label>MDFI</label>
    </interactant>
    <organismsDiffer>false</organismsDiffer>
    <experiments>7</experiments>
</comment>
<comment type="interaction">
    <interactant intactId="EBI-750394">
        <id>Q9UBX3</id>
    </interactant>
    <interactant intactId="EBI-945833">
        <id>Q7Z3S9</id>
        <label>NOTCH2NLA</label>
    </interactant>
    <organismsDiffer>false</organismsDiffer>
    <experiments>4</experiments>
</comment>
<comment type="interaction">
    <interactant intactId="EBI-12056597">
        <id>Q9UBX3-2</id>
    </interactant>
    <interactant intactId="EBI-3958099">
        <id>P26371</id>
        <label>KRTAP5-9</label>
    </interactant>
    <organismsDiffer>false</organismsDiffer>
    <experiments>3</experiments>
</comment>
<comment type="interaction">
    <interactant intactId="EBI-12056597">
        <id>Q9UBX3-2</id>
    </interactant>
    <interactant intactId="EBI-724076">
        <id>Q99750</id>
        <label>MDFI</label>
    </interactant>
    <organismsDiffer>false</organismsDiffer>
    <experiments>3</experiments>
</comment>
<comment type="interaction">
    <interactant intactId="EBI-12056597">
        <id>Q9UBX3-2</id>
    </interactant>
    <interactant intactId="EBI-1210429">
        <id>Q9NYW8</id>
        <label>RBAK</label>
    </interactant>
    <organismsDiffer>false</organismsDiffer>
    <experiments>3</experiments>
</comment>
<comment type="subcellular location">
    <subcellularLocation>
        <location>Mitochondrion inner membrane</location>
        <topology>Multi-pass membrane protein</topology>
    </subcellularLocation>
</comment>
<comment type="alternative products">
    <event type="alternative splicing"/>
    <isoform>
        <id>Q9UBX3-1</id>
        <name>1</name>
        <sequence type="displayed"/>
    </isoform>
    <isoform>
        <id>Q9UBX3-2</id>
        <name>2</name>
        <sequence type="described" ref="VSP_003267"/>
    </isoform>
</comment>
<comment type="tissue specificity">
    <text evidence="4">Present in high amounts in liver and kidney, and at lower levels in all the other tissues analyzed.</text>
</comment>
<comment type="disease" evidence="5">
    <disease id="DI-05891">
        <name>Mitochondrial DNA depletion syndrome 19</name>
        <acronym>MTDPS19</acronym>
        <description>An autosomal recessive mitochondrial disorder characterized by progressive and severe epileptic encephalopathy, hypotonia, poor spontaneous movements evolving to spastic quadriparesis and dyskinesias, and respiratory complex I deficiency and mitochondrial DNA depletion in skeletal muscle.</description>
        <dbReference type="MIM" id="618972"/>
    </disease>
    <text>The disease may be caused by variants affecting the gene represented in this entry.</text>
</comment>
<comment type="similarity">
    <text evidence="8">Belongs to the mitochondrial carrier (TC 2.A.29) family.</text>
</comment>
<reference key="1">
    <citation type="journal article" date="1999" name="Biochem. J.">
        <title>Organization and sequence of the gene for the human mitochondrial dicarboxylate carrier: evolution of the carrier family.</title>
        <authorList>
            <person name="Fiermonte G."/>
            <person name="Dolce V."/>
            <person name="Arrigoni R."/>
            <person name="Runswick M.J."/>
            <person name="Walker J.E."/>
            <person name="Palmieri F."/>
        </authorList>
    </citation>
    <scope>NUCLEOTIDE SEQUENCE [GENOMIC DNA / MRNA] (ISOFORM 1)</scope>
    <scope>TISSUE SPECIFICITY</scope>
</reference>
<reference key="2">
    <citation type="journal article" date="2005" name="DNA Res.">
        <title>Signal sequence and keyword trap in silico for selection of full-length human cDNAs encoding secretion or membrane proteins from oligo-capped cDNA libraries.</title>
        <authorList>
            <person name="Otsuki T."/>
            <person name="Ota T."/>
            <person name="Nishikawa T."/>
            <person name="Hayashi K."/>
            <person name="Suzuki Y."/>
            <person name="Yamamoto J."/>
            <person name="Wakamatsu A."/>
            <person name="Kimura K."/>
            <person name="Sakamoto K."/>
            <person name="Hatano N."/>
            <person name="Kawai Y."/>
            <person name="Ishii S."/>
            <person name="Saito K."/>
            <person name="Kojima S."/>
            <person name="Sugiyama T."/>
            <person name="Ono T."/>
            <person name="Okano K."/>
            <person name="Yoshikawa Y."/>
            <person name="Aotsuka S."/>
            <person name="Sasaki N."/>
            <person name="Hattori A."/>
            <person name="Okumura K."/>
            <person name="Nagai K."/>
            <person name="Sugano S."/>
            <person name="Isogai T."/>
        </authorList>
    </citation>
    <scope>NUCLEOTIDE SEQUENCE [LARGE SCALE MRNA] (ISOFORM 1)</scope>
    <source>
        <tissue>Thyroid</tissue>
    </source>
</reference>
<reference key="3">
    <citation type="submission" date="2005-07" db="EMBL/GenBank/DDBJ databases">
        <authorList>
            <person name="Mural R.J."/>
            <person name="Istrail S."/>
            <person name="Sutton G.G."/>
            <person name="Florea L."/>
            <person name="Halpern A.L."/>
            <person name="Mobarry C.M."/>
            <person name="Lippert R."/>
            <person name="Walenz B."/>
            <person name="Shatkay H."/>
            <person name="Dew I."/>
            <person name="Miller J.R."/>
            <person name="Flanigan M.J."/>
            <person name="Edwards N.J."/>
            <person name="Bolanos R."/>
            <person name="Fasulo D."/>
            <person name="Halldorsson B.V."/>
            <person name="Hannenhalli S."/>
            <person name="Turner R."/>
            <person name="Yooseph S."/>
            <person name="Lu F."/>
            <person name="Nusskern D.R."/>
            <person name="Shue B.C."/>
            <person name="Zheng X.H."/>
            <person name="Zhong F."/>
            <person name="Delcher A.L."/>
            <person name="Huson D.H."/>
            <person name="Kravitz S.A."/>
            <person name="Mouchard L."/>
            <person name="Reinert K."/>
            <person name="Remington K.A."/>
            <person name="Clark A.G."/>
            <person name="Waterman M.S."/>
            <person name="Eichler E.E."/>
            <person name="Adams M.D."/>
            <person name="Hunkapiller M.W."/>
            <person name="Myers E.W."/>
            <person name="Venter J.C."/>
        </authorList>
    </citation>
    <scope>NUCLEOTIDE SEQUENCE [LARGE SCALE GENOMIC DNA]</scope>
</reference>
<reference key="4">
    <citation type="journal article" date="2004" name="Genome Res.">
        <title>The status, quality, and expansion of the NIH full-length cDNA project: the Mammalian Gene Collection (MGC).</title>
        <authorList>
            <consortium name="The MGC Project Team"/>
        </authorList>
    </citation>
    <scope>NUCLEOTIDE SEQUENCE [LARGE SCALE MRNA] (ISOFORMS 1 AND 2)</scope>
    <source>
        <tissue>Skin</tissue>
        <tissue>Uterus</tissue>
    </source>
</reference>
<reference key="5">
    <citation type="journal article" date="2011" name="BMC Syst. Biol.">
        <title>Initial characterization of the human central proteome.</title>
        <authorList>
            <person name="Burkard T.R."/>
            <person name="Planyavsky M."/>
            <person name="Kaupe I."/>
            <person name="Breitwieser F.P."/>
            <person name="Buerckstuemmer T."/>
            <person name="Bennett K.L."/>
            <person name="Superti-Furga G."/>
            <person name="Colinge J."/>
        </authorList>
    </citation>
    <scope>IDENTIFICATION BY MASS SPECTROMETRY [LARGE SCALE ANALYSIS]</scope>
</reference>
<reference key="6">
    <citation type="journal article" date="2018" name="Hum. Mol. Genet.">
        <title>SLC25A10 biallelic mutations in intractable epileptic encephalopathy with complex I deficiency.</title>
        <authorList>
            <person name="Punzi G."/>
            <person name="Porcelli V."/>
            <person name="Ruggiu M."/>
            <person name="Hossain M.F."/>
            <person name="Menga A."/>
            <person name="Scarcia P."/>
            <person name="Castegna A."/>
            <person name="Gorgoglione R."/>
            <person name="Pierri C.L."/>
            <person name="Laera L."/>
            <person name="Lasorsa F.M."/>
            <person name="Paradies E."/>
            <person name="Pisano I."/>
            <person name="Marobbio C.M.T."/>
            <person name="Lamantea E."/>
            <person name="Ghezzi D."/>
            <person name="Tiranti V."/>
            <person name="Giannattasio S."/>
            <person name="Donati M.A."/>
            <person name="Guerrini R."/>
            <person name="Palmieri L."/>
            <person name="Palmieri F."/>
            <person name="De Grassi A."/>
        </authorList>
    </citation>
    <scope>INVOLVEMENT IN MTDPS19</scope>
    <scope>VARIANT MTDPS19 102-LYS--SER-287 DEL</scope>
    <scope>CHARACTERIZATION OF VARIANT MTDPS19 102-LYS--SER-287 DEL</scope>
    <scope>FUNCTION</scope>
    <scope>TRANSPORT ACTIVITY</scope>
</reference>
<name>DIC_HUMAN</name>
<evidence type="ECO:0000250" key="1">
    <source>
        <dbReference type="UniProtKB" id="O89035"/>
    </source>
</evidence>
<evidence type="ECO:0000250" key="2">
    <source>
        <dbReference type="UniProtKB" id="Q9QZD8"/>
    </source>
</evidence>
<evidence type="ECO:0000255" key="3"/>
<evidence type="ECO:0000269" key="4">
    <source>
    </source>
</evidence>
<evidence type="ECO:0000269" key="5">
    <source>
    </source>
</evidence>
<evidence type="ECO:0000303" key="6">
    <source>
    </source>
</evidence>
<evidence type="ECO:0000303" key="7">
    <source>
    </source>
</evidence>
<evidence type="ECO:0000305" key="8"/>
<evidence type="ECO:0000305" key="9">
    <source>
    </source>
</evidence>
<keyword id="KW-0025">Alternative splicing</keyword>
<keyword id="KW-0050">Antiport</keyword>
<keyword id="KW-0225">Disease variant</keyword>
<keyword id="KW-0445">Lipid transport</keyword>
<keyword id="KW-0472">Membrane</keyword>
<keyword id="KW-0496">Mitochondrion</keyword>
<keyword id="KW-0999">Mitochondrion inner membrane</keyword>
<keyword id="KW-1274">Primary mitochondrial disease</keyword>
<keyword id="KW-1267">Proteomics identification</keyword>
<keyword id="KW-1185">Reference proteome</keyword>
<keyword id="KW-0677">Repeat</keyword>
<keyword id="KW-0812">Transmembrane</keyword>
<keyword id="KW-1133">Transmembrane helix</keyword>
<keyword id="KW-0813">Transport</keyword>
<protein>
    <recommendedName>
        <fullName evidence="6">Mitochondrial dicarboxylate carrier</fullName>
        <shortName>DIC</shortName>
    </recommendedName>
    <alternativeName>
        <fullName>Solute carrier family 25 member 10</fullName>
    </alternativeName>
</protein>
<gene>
    <name type="primary">SLC25A10</name>
    <name type="synonym">DIC</name>
</gene>
<organism>
    <name type="scientific">Homo sapiens</name>
    <name type="common">Human</name>
    <dbReference type="NCBI Taxonomy" id="9606"/>
    <lineage>
        <taxon>Eukaryota</taxon>
        <taxon>Metazoa</taxon>
        <taxon>Chordata</taxon>
        <taxon>Craniata</taxon>
        <taxon>Vertebrata</taxon>
        <taxon>Euteleostomi</taxon>
        <taxon>Mammalia</taxon>
        <taxon>Eutheria</taxon>
        <taxon>Euarchontoglires</taxon>
        <taxon>Primates</taxon>
        <taxon>Haplorrhini</taxon>
        <taxon>Catarrhini</taxon>
        <taxon>Hominidae</taxon>
        <taxon>Homo</taxon>
    </lineage>
</organism>